<comment type="function">
    <text evidence="1">Methylates ribosomal protein L11.</text>
</comment>
<comment type="catalytic activity">
    <reaction evidence="1">
        <text>L-lysyl-[protein] + 3 S-adenosyl-L-methionine = N(6),N(6),N(6)-trimethyl-L-lysyl-[protein] + 3 S-adenosyl-L-homocysteine + 3 H(+)</text>
        <dbReference type="Rhea" id="RHEA:54192"/>
        <dbReference type="Rhea" id="RHEA-COMP:9752"/>
        <dbReference type="Rhea" id="RHEA-COMP:13826"/>
        <dbReference type="ChEBI" id="CHEBI:15378"/>
        <dbReference type="ChEBI" id="CHEBI:29969"/>
        <dbReference type="ChEBI" id="CHEBI:57856"/>
        <dbReference type="ChEBI" id="CHEBI:59789"/>
        <dbReference type="ChEBI" id="CHEBI:61961"/>
    </reaction>
</comment>
<comment type="subcellular location">
    <subcellularLocation>
        <location evidence="1">Cytoplasm</location>
    </subcellularLocation>
</comment>
<comment type="similarity">
    <text evidence="1">Belongs to the methyltransferase superfamily. PrmA family.</text>
</comment>
<protein>
    <recommendedName>
        <fullName evidence="1">Ribosomal protein L11 methyltransferase</fullName>
        <shortName evidence="1">L11 Mtase</shortName>
        <ecNumber evidence="1">2.1.1.-</ecNumber>
    </recommendedName>
</protein>
<organism>
    <name type="scientific">Clostridium perfringens (strain ATCC 13124 / DSM 756 / JCM 1290 / NCIMB 6125 / NCTC 8237 / Type A)</name>
    <dbReference type="NCBI Taxonomy" id="195103"/>
    <lineage>
        <taxon>Bacteria</taxon>
        <taxon>Bacillati</taxon>
        <taxon>Bacillota</taxon>
        <taxon>Clostridia</taxon>
        <taxon>Eubacteriales</taxon>
        <taxon>Clostridiaceae</taxon>
        <taxon>Clostridium</taxon>
    </lineage>
</organism>
<keyword id="KW-0963">Cytoplasm</keyword>
<keyword id="KW-0489">Methyltransferase</keyword>
<keyword id="KW-0949">S-adenosyl-L-methionine</keyword>
<keyword id="KW-0808">Transferase</keyword>
<feature type="chain" id="PRO_1000046013" description="Ribosomal protein L11 methyltransferase">
    <location>
        <begin position="1"/>
        <end position="313"/>
    </location>
</feature>
<feature type="binding site" evidence="1">
    <location>
        <position position="164"/>
    </location>
    <ligand>
        <name>S-adenosyl-L-methionine</name>
        <dbReference type="ChEBI" id="CHEBI:59789"/>
    </ligand>
</feature>
<feature type="binding site" evidence="1">
    <location>
        <position position="185"/>
    </location>
    <ligand>
        <name>S-adenosyl-L-methionine</name>
        <dbReference type="ChEBI" id="CHEBI:59789"/>
    </ligand>
</feature>
<feature type="binding site" evidence="1">
    <location>
        <position position="207"/>
    </location>
    <ligand>
        <name>S-adenosyl-L-methionine</name>
        <dbReference type="ChEBI" id="CHEBI:59789"/>
    </ligand>
</feature>
<feature type="binding site" evidence="1">
    <location>
        <position position="249"/>
    </location>
    <ligand>
        <name>S-adenosyl-L-methionine</name>
        <dbReference type="ChEBI" id="CHEBI:59789"/>
    </ligand>
</feature>
<name>PRMA_CLOP1</name>
<sequence length="313" mass="34770">MEGTWIEVRVITKSEALEPISGIFYGLDCKGVAIEDPNDILGREQGPLTWDFADINILEHKGKVAVVKGYFSEEDNIDDVIAYVKERVEELKESGLDVGEGTVEAEKMFEEDWANNWKKYYKPIKIGEKIVIKPIWEEYEPTGEEMVVELDPGMAFGTGDHETTRMCVQALDKYVKADTTVFDIGTGSGILALVASKLGAKHVLGVDLDPVAVDSAKENISFNNVDNIEVLYGNLLDVVDGKADIVVANIIAEIICILVDDVKKALNKDGIFITSGIIHERRQMVIDKLEQEGFEVMEVNKDGEWNCIVAKLK</sequence>
<reference key="1">
    <citation type="journal article" date="2006" name="Genome Res.">
        <title>Skewed genomic variability in strains of the toxigenic bacterial pathogen, Clostridium perfringens.</title>
        <authorList>
            <person name="Myers G.S.A."/>
            <person name="Rasko D.A."/>
            <person name="Cheung J.K."/>
            <person name="Ravel J."/>
            <person name="Seshadri R."/>
            <person name="DeBoy R.T."/>
            <person name="Ren Q."/>
            <person name="Varga J."/>
            <person name="Awad M.M."/>
            <person name="Brinkac L.M."/>
            <person name="Daugherty S.C."/>
            <person name="Haft D.H."/>
            <person name="Dodson R.J."/>
            <person name="Madupu R."/>
            <person name="Nelson W.C."/>
            <person name="Rosovitz M.J."/>
            <person name="Sullivan S.A."/>
            <person name="Khouri H."/>
            <person name="Dimitrov G.I."/>
            <person name="Watkins K.L."/>
            <person name="Mulligan S."/>
            <person name="Benton J."/>
            <person name="Radune D."/>
            <person name="Fisher D.J."/>
            <person name="Atkins H.S."/>
            <person name="Hiscox T."/>
            <person name="Jost B.H."/>
            <person name="Billington S.J."/>
            <person name="Songer J.G."/>
            <person name="McClane B.A."/>
            <person name="Titball R.W."/>
            <person name="Rood J.I."/>
            <person name="Melville S.B."/>
            <person name="Paulsen I.T."/>
        </authorList>
    </citation>
    <scope>NUCLEOTIDE SEQUENCE [LARGE SCALE GENOMIC DNA]</scope>
    <source>
        <strain>ATCC 13124 / DSM 756 / JCM 1290 / NCIMB 6125 / NCTC 8237 / S 107 / Type A</strain>
    </source>
</reference>
<dbReference type="EC" id="2.1.1.-" evidence="1"/>
<dbReference type="EMBL" id="CP000246">
    <property type="protein sequence ID" value="ABG82995.1"/>
    <property type="molecule type" value="Genomic_DNA"/>
</dbReference>
<dbReference type="RefSeq" id="WP_011591027.1">
    <property type="nucleotide sequence ID" value="NC_008261.1"/>
</dbReference>
<dbReference type="SMR" id="Q0TNT3"/>
<dbReference type="STRING" id="195103.CPF_2284"/>
<dbReference type="PaxDb" id="195103-CPF_2284"/>
<dbReference type="GeneID" id="93001435"/>
<dbReference type="KEGG" id="cpf:CPF_2284"/>
<dbReference type="eggNOG" id="COG2264">
    <property type="taxonomic scope" value="Bacteria"/>
</dbReference>
<dbReference type="HOGENOM" id="CLU_049382_0_1_9"/>
<dbReference type="Proteomes" id="UP000001823">
    <property type="component" value="Chromosome"/>
</dbReference>
<dbReference type="GO" id="GO:0005737">
    <property type="term" value="C:cytoplasm"/>
    <property type="evidence" value="ECO:0007669"/>
    <property type="project" value="UniProtKB-SubCell"/>
</dbReference>
<dbReference type="GO" id="GO:0016279">
    <property type="term" value="F:protein-lysine N-methyltransferase activity"/>
    <property type="evidence" value="ECO:0007669"/>
    <property type="project" value="RHEA"/>
</dbReference>
<dbReference type="GO" id="GO:0032259">
    <property type="term" value="P:methylation"/>
    <property type="evidence" value="ECO:0007669"/>
    <property type="project" value="UniProtKB-KW"/>
</dbReference>
<dbReference type="CDD" id="cd02440">
    <property type="entry name" value="AdoMet_MTases"/>
    <property type="match status" value="1"/>
</dbReference>
<dbReference type="Gene3D" id="3.40.50.150">
    <property type="entry name" value="Vaccinia Virus protein VP39"/>
    <property type="match status" value="1"/>
</dbReference>
<dbReference type="HAMAP" id="MF_00735">
    <property type="entry name" value="Methyltr_PrmA"/>
    <property type="match status" value="1"/>
</dbReference>
<dbReference type="InterPro" id="IPR050078">
    <property type="entry name" value="Ribosomal_L11_MeTrfase_PrmA"/>
</dbReference>
<dbReference type="InterPro" id="IPR004498">
    <property type="entry name" value="Ribosomal_PrmA_MeTrfase"/>
</dbReference>
<dbReference type="InterPro" id="IPR029063">
    <property type="entry name" value="SAM-dependent_MTases_sf"/>
</dbReference>
<dbReference type="NCBIfam" id="TIGR00406">
    <property type="entry name" value="prmA"/>
    <property type="match status" value="1"/>
</dbReference>
<dbReference type="PANTHER" id="PTHR43648">
    <property type="entry name" value="ELECTRON TRANSFER FLAVOPROTEIN BETA SUBUNIT LYSINE METHYLTRANSFERASE"/>
    <property type="match status" value="1"/>
</dbReference>
<dbReference type="PANTHER" id="PTHR43648:SF1">
    <property type="entry name" value="ELECTRON TRANSFER FLAVOPROTEIN BETA SUBUNIT LYSINE METHYLTRANSFERASE"/>
    <property type="match status" value="1"/>
</dbReference>
<dbReference type="Pfam" id="PF06325">
    <property type="entry name" value="PrmA"/>
    <property type="match status" value="1"/>
</dbReference>
<dbReference type="PIRSF" id="PIRSF000401">
    <property type="entry name" value="RPL11_MTase"/>
    <property type="match status" value="1"/>
</dbReference>
<dbReference type="SUPFAM" id="SSF53335">
    <property type="entry name" value="S-adenosyl-L-methionine-dependent methyltransferases"/>
    <property type="match status" value="1"/>
</dbReference>
<accession>Q0TNT3</accession>
<evidence type="ECO:0000255" key="1">
    <source>
        <dbReference type="HAMAP-Rule" id="MF_00735"/>
    </source>
</evidence>
<proteinExistence type="inferred from homology"/>
<gene>
    <name evidence="1" type="primary">prmA</name>
    <name type="ordered locus">CPF_2284</name>
</gene>